<proteinExistence type="inferred from homology"/>
<organism>
    <name type="scientific">Debaryomyces hansenii (strain ATCC 36239 / CBS 767 / BCRC 21394 / JCM 1990 / NBRC 0083 / IGC 2968)</name>
    <name type="common">Yeast</name>
    <name type="synonym">Torulaspora hansenii</name>
    <dbReference type="NCBI Taxonomy" id="284592"/>
    <lineage>
        <taxon>Eukaryota</taxon>
        <taxon>Fungi</taxon>
        <taxon>Dikarya</taxon>
        <taxon>Ascomycota</taxon>
        <taxon>Saccharomycotina</taxon>
        <taxon>Pichiomycetes</taxon>
        <taxon>Debaryomycetaceae</taxon>
        <taxon>Debaryomyces</taxon>
    </lineage>
</organism>
<comment type="function">
    <text evidence="1">Has a role in mitochondrial fission. Has a role in outer membrane fission but not matrix separation (By similarity).</text>
</comment>
<comment type="subcellular location">
    <subcellularLocation>
        <location evidence="1">Mitochondrion outer membrane</location>
        <topology evidence="1">Single-pass membrane protein</topology>
    </subcellularLocation>
</comment>
<comment type="domain">
    <text evidence="1">The C-terminus is required for mitochondrial localization, while the N-terminus is necessary for mitochondrial fission.</text>
</comment>
<comment type="similarity">
    <text evidence="3">Belongs to the FIS1 family.</text>
</comment>
<gene>
    <name type="primary">FIS1</name>
    <name type="ordered locus">DEHA2F13552g</name>
</gene>
<protein>
    <recommendedName>
        <fullName>Mitochondrial fission 1 protein</fullName>
    </recommendedName>
</protein>
<sequence length="153" mass="17047">MFGKSTYPALEELQESLSSEQLRILKDQVESEGQDPAPQSQFNYAWGLIKSSNYKMQQQGISILSELYRDVPSMRRECLYYLALGSYKIGDYSNATRYADTLLKNEPENKQAQDLKKSIHEKVTQEGLIGIGIAGGALAVGVGILGALLRKKR</sequence>
<reference key="1">
    <citation type="journal article" date="2004" name="Nature">
        <title>Genome evolution in yeasts.</title>
        <authorList>
            <person name="Dujon B."/>
            <person name="Sherman D."/>
            <person name="Fischer G."/>
            <person name="Durrens P."/>
            <person name="Casaregola S."/>
            <person name="Lafontaine I."/>
            <person name="de Montigny J."/>
            <person name="Marck C."/>
            <person name="Neuveglise C."/>
            <person name="Talla E."/>
            <person name="Goffard N."/>
            <person name="Frangeul L."/>
            <person name="Aigle M."/>
            <person name="Anthouard V."/>
            <person name="Babour A."/>
            <person name="Barbe V."/>
            <person name="Barnay S."/>
            <person name="Blanchin S."/>
            <person name="Beckerich J.-M."/>
            <person name="Beyne E."/>
            <person name="Bleykasten C."/>
            <person name="Boisrame A."/>
            <person name="Boyer J."/>
            <person name="Cattolico L."/>
            <person name="Confanioleri F."/>
            <person name="de Daruvar A."/>
            <person name="Despons L."/>
            <person name="Fabre E."/>
            <person name="Fairhead C."/>
            <person name="Ferry-Dumazet H."/>
            <person name="Groppi A."/>
            <person name="Hantraye F."/>
            <person name="Hennequin C."/>
            <person name="Jauniaux N."/>
            <person name="Joyet P."/>
            <person name="Kachouri R."/>
            <person name="Kerrest A."/>
            <person name="Koszul R."/>
            <person name="Lemaire M."/>
            <person name="Lesur I."/>
            <person name="Ma L."/>
            <person name="Muller H."/>
            <person name="Nicaud J.-M."/>
            <person name="Nikolski M."/>
            <person name="Oztas S."/>
            <person name="Ozier-Kalogeropoulos O."/>
            <person name="Pellenz S."/>
            <person name="Potier S."/>
            <person name="Richard G.-F."/>
            <person name="Straub M.-L."/>
            <person name="Suleau A."/>
            <person name="Swennen D."/>
            <person name="Tekaia F."/>
            <person name="Wesolowski-Louvel M."/>
            <person name="Westhof E."/>
            <person name="Wirth B."/>
            <person name="Zeniou-Meyer M."/>
            <person name="Zivanovic Y."/>
            <person name="Bolotin-Fukuhara M."/>
            <person name="Thierry A."/>
            <person name="Bouchier C."/>
            <person name="Caudron B."/>
            <person name="Scarpelli C."/>
            <person name="Gaillardin C."/>
            <person name="Weissenbach J."/>
            <person name="Wincker P."/>
            <person name="Souciet J.-L."/>
        </authorList>
    </citation>
    <scope>NUCLEOTIDE SEQUENCE [LARGE SCALE GENOMIC DNA]</scope>
    <source>
        <strain>ATCC 36239 / CBS 767 / BCRC 21394 / JCM 1990 / NBRC 0083 / IGC 2968</strain>
    </source>
</reference>
<name>FIS1_DEBHA</name>
<feature type="chain" id="PRO_0000256184" description="Mitochondrial fission 1 protein">
    <location>
        <begin position="1"/>
        <end position="153"/>
    </location>
</feature>
<feature type="topological domain" description="Cytoplasmic" evidence="2">
    <location>
        <begin position="1"/>
        <end position="127"/>
    </location>
</feature>
<feature type="transmembrane region" description="Helical" evidence="2">
    <location>
        <begin position="128"/>
        <end position="148"/>
    </location>
</feature>
<feature type="topological domain" description="Mitochondrial intermembrane" evidence="2">
    <location>
        <begin position="149"/>
        <end position="153"/>
    </location>
</feature>
<feature type="repeat" description="TPR">
    <location>
        <begin position="76"/>
        <end position="109"/>
    </location>
</feature>
<dbReference type="EMBL" id="CR382138">
    <property type="protein sequence ID" value="CAG89311.2"/>
    <property type="molecule type" value="Genomic_DNA"/>
</dbReference>
<dbReference type="RefSeq" id="XP_460953.2">
    <property type="nucleotide sequence ID" value="XM_460953.1"/>
</dbReference>
<dbReference type="SMR" id="Q6BLG8"/>
<dbReference type="FunCoup" id="Q6BLG8">
    <property type="interactions" value="715"/>
</dbReference>
<dbReference type="STRING" id="284592.Q6BLG8"/>
<dbReference type="GeneID" id="2904059"/>
<dbReference type="KEGG" id="dha:DEHA2F13552g"/>
<dbReference type="VEuPathDB" id="FungiDB:DEHA2F13552g"/>
<dbReference type="eggNOG" id="KOG3364">
    <property type="taxonomic scope" value="Eukaryota"/>
</dbReference>
<dbReference type="HOGENOM" id="CLU_104368_2_0_1"/>
<dbReference type="InParanoid" id="Q6BLG8"/>
<dbReference type="OMA" id="QFNYAWG"/>
<dbReference type="OrthoDB" id="421154at2759"/>
<dbReference type="Proteomes" id="UP000000599">
    <property type="component" value="Chromosome F"/>
</dbReference>
<dbReference type="GO" id="GO:0005741">
    <property type="term" value="C:mitochondrial outer membrane"/>
    <property type="evidence" value="ECO:0007669"/>
    <property type="project" value="UniProtKB-SubCell"/>
</dbReference>
<dbReference type="GO" id="GO:0005778">
    <property type="term" value="C:peroxisomal membrane"/>
    <property type="evidence" value="ECO:0007669"/>
    <property type="project" value="TreeGrafter"/>
</dbReference>
<dbReference type="GO" id="GO:0000422">
    <property type="term" value="P:autophagy of mitochondrion"/>
    <property type="evidence" value="ECO:0007669"/>
    <property type="project" value="TreeGrafter"/>
</dbReference>
<dbReference type="GO" id="GO:0000266">
    <property type="term" value="P:mitochondrial fission"/>
    <property type="evidence" value="ECO:0007669"/>
    <property type="project" value="InterPro"/>
</dbReference>
<dbReference type="GO" id="GO:0016559">
    <property type="term" value="P:peroxisome fission"/>
    <property type="evidence" value="ECO:0007669"/>
    <property type="project" value="TreeGrafter"/>
</dbReference>
<dbReference type="CDD" id="cd12212">
    <property type="entry name" value="Fis1"/>
    <property type="match status" value="1"/>
</dbReference>
<dbReference type="Gene3D" id="1.25.40.10">
    <property type="entry name" value="Tetratricopeptide repeat domain"/>
    <property type="match status" value="1"/>
</dbReference>
<dbReference type="InterPro" id="IPR016543">
    <property type="entry name" value="Fis1"/>
</dbReference>
<dbReference type="InterPro" id="IPR033745">
    <property type="entry name" value="Fis1_cytosol"/>
</dbReference>
<dbReference type="InterPro" id="IPR028061">
    <property type="entry name" value="Fis1_TPR_C"/>
</dbReference>
<dbReference type="InterPro" id="IPR028058">
    <property type="entry name" value="Fis1_TPR_N"/>
</dbReference>
<dbReference type="InterPro" id="IPR011990">
    <property type="entry name" value="TPR-like_helical_dom_sf"/>
</dbReference>
<dbReference type="PANTHER" id="PTHR13247:SF0">
    <property type="entry name" value="MITOCHONDRIAL FISSION 1 PROTEIN"/>
    <property type="match status" value="1"/>
</dbReference>
<dbReference type="PANTHER" id="PTHR13247">
    <property type="entry name" value="TETRATRICOPEPTIDE REPEAT PROTEIN 11 TPR REPEAT PROTEIN 11"/>
    <property type="match status" value="1"/>
</dbReference>
<dbReference type="Pfam" id="PF14853">
    <property type="entry name" value="Fis1_TPR_C"/>
    <property type="match status" value="1"/>
</dbReference>
<dbReference type="Pfam" id="PF14852">
    <property type="entry name" value="Fis1_TPR_N"/>
    <property type="match status" value="1"/>
</dbReference>
<dbReference type="PIRSF" id="PIRSF008835">
    <property type="entry name" value="TPR_repeat_11_Fis1"/>
    <property type="match status" value="1"/>
</dbReference>
<dbReference type="SUPFAM" id="SSF48452">
    <property type="entry name" value="TPR-like"/>
    <property type="match status" value="1"/>
</dbReference>
<evidence type="ECO:0000250" key="1"/>
<evidence type="ECO:0000255" key="2"/>
<evidence type="ECO:0000305" key="3"/>
<accession>Q6BLG8</accession>
<keyword id="KW-0472">Membrane</keyword>
<keyword id="KW-0496">Mitochondrion</keyword>
<keyword id="KW-1000">Mitochondrion outer membrane</keyword>
<keyword id="KW-1185">Reference proteome</keyword>
<keyword id="KW-0677">Repeat</keyword>
<keyword id="KW-0802">TPR repeat</keyword>
<keyword id="KW-0812">Transmembrane</keyword>
<keyword id="KW-1133">Transmembrane helix</keyword>